<feature type="chain" id="PRO_0000324929" description="Leucine aminopeptidase 2">
    <location>
        <begin position="1"/>
        <end position="618"/>
    </location>
</feature>
<feature type="active site" description="Proton acceptor" evidence="3">
    <location>
        <position position="302"/>
    </location>
</feature>
<feature type="active site" description="Proton donor" evidence="3">
    <location>
        <position position="389"/>
    </location>
</feature>
<feature type="binding site" evidence="1">
    <location>
        <begin position="140"/>
        <end position="142"/>
    </location>
    <ligand>
        <name>a peptide</name>
        <dbReference type="ChEBI" id="CHEBI:60466"/>
    </ligand>
</feature>
<feature type="binding site" evidence="1">
    <location>
        <begin position="272"/>
        <end position="277"/>
    </location>
    <ligand>
        <name>a peptide</name>
        <dbReference type="ChEBI" id="CHEBI:60466"/>
    </ligand>
</feature>
<feature type="binding site" evidence="3">
    <location>
        <position position="301"/>
    </location>
    <ligand>
        <name>Zn(2+)</name>
        <dbReference type="ChEBI" id="CHEBI:29105"/>
        <note>catalytic</note>
    </ligand>
</feature>
<feature type="binding site" evidence="3">
    <location>
        <position position="305"/>
    </location>
    <ligand>
        <name>Zn(2+)</name>
        <dbReference type="ChEBI" id="CHEBI:29105"/>
        <note>catalytic</note>
    </ligand>
</feature>
<feature type="binding site" evidence="3">
    <location>
        <position position="324"/>
    </location>
    <ligand>
        <name>Zn(2+)</name>
        <dbReference type="ChEBI" id="CHEBI:29105"/>
        <note>catalytic</note>
    </ligand>
</feature>
<name>LKHA4_EMENI</name>
<accession>Q5B0W8</accession>
<accession>C8V091</accession>
<reference key="1">
    <citation type="journal article" date="2005" name="Nature">
        <title>Sequencing of Aspergillus nidulans and comparative analysis with A. fumigatus and A. oryzae.</title>
        <authorList>
            <person name="Galagan J.E."/>
            <person name="Calvo S.E."/>
            <person name="Cuomo C."/>
            <person name="Ma L.-J."/>
            <person name="Wortman J.R."/>
            <person name="Batzoglou S."/>
            <person name="Lee S.-I."/>
            <person name="Bastuerkmen M."/>
            <person name="Spevak C.C."/>
            <person name="Clutterbuck J."/>
            <person name="Kapitonov V."/>
            <person name="Jurka J."/>
            <person name="Scazzocchio C."/>
            <person name="Farman M.L."/>
            <person name="Butler J."/>
            <person name="Purcell S."/>
            <person name="Harris S."/>
            <person name="Braus G.H."/>
            <person name="Draht O."/>
            <person name="Busch S."/>
            <person name="D'Enfert C."/>
            <person name="Bouchier C."/>
            <person name="Goldman G.H."/>
            <person name="Bell-Pedersen D."/>
            <person name="Griffiths-Jones S."/>
            <person name="Doonan J.H."/>
            <person name="Yu J."/>
            <person name="Vienken K."/>
            <person name="Pain A."/>
            <person name="Freitag M."/>
            <person name="Selker E.U."/>
            <person name="Archer D.B."/>
            <person name="Penalva M.A."/>
            <person name="Oakley B.R."/>
            <person name="Momany M."/>
            <person name="Tanaka T."/>
            <person name="Kumagai T."/>
            <person name="Asai K."/>
            <person name="Machida M."/>
            <person name="Nierman W.C."/>
            <person name="Denning D.W."/>
            <person name="Caddick M.X."/>
            <person name="Hynes M."/>
            <person name="Paoletti M."/>
            <person name="Fischer R."/>
            <person name="Miller B.L."/>
            <person name="Dyer P.S."/>
            <person name="Sachs M.S."/>
            <person name="Osmani S.A."/>
            <person name="Birren B.W."/>
        </authorList>
    </citation>
    <scope>NUCLEOTIDE SEQUENCE [LARGE SCALE GENOMIC DNA]</scope>
    <source>
        <strain>FGSC A4 / ATCC 38163 / CBS 112.46 / NRRL 194 / M139</strain>
    </source>
</reference>
<reference key="2">
    <citation type="journal article" date="2009" name="Fungal Genet. Biol.">
        <title>The 2008 update of the Aspergillus nidulans genome annotation: a community effort.</title>
        <authorList>
            <person name="Wortman J.R."/>
            <person name="Gilsenan J.M."/>
            <person name="Joardar V."/>
            <person name="Deegan J."/>
            <person name="Clutterbuck J."/>
            <person name="Andersen M.R."/>
            <person name="Archer D."/>
            <person name="Bencina M."/>
            <person name="Braus G."/>
            <person name="Coutinho P."/>
            <person name="von Dohren H."/>
            <person name="Doonan J."/>
            <person name="Driessen A.J."/>
            <person name="Durek P."/>
            <person name="Espeso E."/>
            <person name="Fekete E."/>
            <person name="Flipphi M."/>
            <person name="Estrada C.G."/>
            <person name="Geysens S."/>
            <person name="Goldman G."/>
            <person name="de Groot P.W."/>
            <person name="Hansen K."/>
            <person name="Harris S.D."/>
            <person name="Heinekamp T."/>
            <person name="Helmstaedt K."/>
            <person name="Henrissat B."/>
            <person name="Hofmann G."/>
            <person name="Homan T."/>
            <person name="Horio T."/>
            <person name="Horiuchi H."/>
            <person name="James S."/>
            <person name="Jones M."/>
            <person name="Karaffa L."/>
            <person name="Karanyi Z."/>
            <person name="Kato M."/>
            <person name="Keller N."/>
            <person name="Kelly D.E."/>
            <person name="Kiel J.A."/>
            <person name="Kim J.M."/>
            <person name="van der Klei I.J."/>
            <person name="Klis F.M."/>
            <person name="Kovalchuk A."/>
            <person name="Krasevec N."/>
            <person name="Kubicek C.P."/>
            <person name="Liu B."/>
            <person name="Maccabe A."/>
            <person name="Meyer V."/>
            <person name="Mirabito P."/>
            <person name="Miskei M."/>
            <person name="Mos M."/>
            <person name="Mullins J."/>
            <person name="Nelson D.R."/>
            <person name="Nielsen J."/>
            <person name="Oakley B.R."/>
            <person name="Osmani S.A."/>
            <person name="Pakula T."/>
            <person name="Paszewski A."/>
            <person name="Paulsen I."/>
            <person name="Pilsyk S."/>
            <person name="Pocsi I."/>
            <person name="Punt P.J."/>
            <person name="Ram A.F."/>
            <person name="Ren Q."/>
            <person name="Robellet X."/>
            <person name="Robson G."/>
            <person name="Seiboth B."/>
            <person name="van Solingen P."/>
            <person name="Specht T."/>
            <person name="Sun J."/>
            <person name="Taheri-Talesh N."/>
            <person name="Takeshita N."/>
            <person name="Ussery D."/>
            <person name="vanKuyk P.A."/>
            <person name="Visser H."/>
            <person name="van de Vondervoort P.J."/>
            <person name="de Vries R.P."/>
            <person name="Walton J."/>
            <person name="Xiang X."/>
            <person name="Xiong Y."/>
            <person name="Zeng A.P."/>
            <person name="Brandt B.W."/>
            <person name="Cornell M.J."/>
            <person name="van den Hondel C.A."/>
            <person name="Visser J."/>
            <person name="Oliver S.G."/>
            <person name="Turner G."/>
        </authorList>
    </citation>
    <scope>GENOME REANNOTATION</scope>
    <source>
        <strain>FGSC A4 / ATCC 38163 / CBS 112.46 / NRRL 194 / M139</strain>
    </source>
</reference>
<comment type="function">
    <text evidence="2">Aminopeptidase that preferentially cleaves di- and tripeptides. Also has low epoxide hydrolase activity (in vitro). Can hydrolyze the epoxide leukotriene LTA(4) but it forms preferentially 5,6-dihydroxy-7,9,11,14-eicosatetraenoic acid rather than the cytokine leukotriene B(4) as the product compared to the homologous mammalian enzyme (in vitro).</text>
</comment>
<comment type="catalytic activity">
    <reaction evidence="2">
        <text>an epoxide + H2O = an ethanediol</text>
        <dbReference type="Rhea" id="RHEA:19037"/>
        <dbReference type="ChEBI" id="CHEBI:15377"/>
        <dbReference type="ChEBI" id="CHEBI:32955"/>
        <dbReference type="ChEBI" id="CHEBI:140594"/>
        <dbReference type="EC" id="3.3.2.10"/>
    </reaction>
</comment>
<comment type="cofactor">
    <cofactor evidence="2">
        <name>Zn(2+)</name>
        <dbReference type="ChEBI" id="CHEBI:29105"/>
    </cofactor>
    <text evidence="2">Binds 1 zinc ion per subunit.</text>
</comment>
<comment type="subcellular location">
    <subcellularLocation>
        <location evidence="2">Cytoplasm</location>
    </subcellularLocation>
    <subcellularLocation>
        <location evidence="2">Nucleus</location>
    </subcellularLocation>
</comment>
<comment type="similarity">
    <text evidence="4">Belongs to the peptidase M1 family.</text>
</comment>
<comment type="sequence caution" evidence="4">
    <conflict type="erroneous initiation">
        <sequence resource="EMBL-CDS" id="EAA58321"/>
    </conflict>
</comment>
<sequence length="618" mass="70100">MATLMNPVRDPNTLSNYNNWLCTHTTANFEIFFEEKKLVGNVVHKLRSITNAETDEIILDSHHVDIRNVQVAGLPVKAWELLPPLGPYGTALKIKLENPVGLNEIIDVDIAVQTTKECTALQWLTPAQTSNKKHPYMFSQCQAIHARSIFPCQDTPDVKCTFDFNITSPLPVIASGLPVRSTSTVPQSGVKTLHRFHQKVPIPSYLFALASGDIAEAAIGPRSVVATSPDKLEECKWELEADTERFIKTIEEIIYPYAWGEYNVLILPPSFPYGGMENPVFTFATPSIISKDRENVDVIAHELAHSWSGNLVTSASWEHFWLNEGWTVYLERRILASLHGEKYRHFSAIIGWKALRDSVEHYSHDHEFTKLVPNLKGEDPDDAFSTIPYEKGFNFLFHLENLVGKEKFDRFIPHYFTTFKGKSLDSYDFKATLLDFFKSDAEASRLLQELDWDSWFYKPGLPPKPEFDTSLADVVYELAGKWRSLPESPFQPQPSDIQGLTANQIVVFLEQILLFERPLTAELSKLMGEVYGLTGSENIEVANLYLQVGLKAADKSVIGPTTDLLGRIGRMKFVRPLYRALQKVDRQVAIDTFEKHKDFYHPICRGMVEKDLFGKKDA</sequence>
<gene>
    <name type="ORF">AN5812</name>
</gene>
<proteinExistence type="inferred from homology"/>
<dbReference type="EC" id="3.4.11.-"/>
<dbReference type="EC" id="3.3.2.10"/>
<dbReference type="EMBL" id="AACD01000100">
    <property type="protein sequence ID" value="EAA58321.1"/>
    <property type="status" value="ALT_INIT"/>
    <property type="molecule type" value="Genomic_DNA"/>
</dbReference>
<dbReference type="EMBL" id="BN001301">
    <property type="protein sequence ID" value="CBF70797.1"/>
    <property type="molecule type" value="Genomic_DNA"/>
</dbReference>
<dbReference type="RefSeq" id="XP_663416.1">
    <property type="nucleotide sequence ID" value="XM_658324.1"/>
</dbReference>
<dbReference type="SMR" id="Q5B0W8"/>
<dbReference type="FunCoup" id="Q5B0W8">
    <property type="interactions" value="1010"/>
</dbReference>
<dbReference type="STRING" id="227321.Q5B0W8"/>
<dbReference type="MEROPS" id="M01.034"/>
<dbReference type="EnsemblFungi" id="CBF70797">
    <property type="protein sequence ID" value="CBF70797"/>
    <property type="gene ID" value="ANIA_05812"/>
</dbReference>
<dbReference type="KEGG" id="ani:ANIA_05812"/>
<dbReference type="eggNOG" id="KOG1047">
    <property type="taxonomic scope" value="Eukaryota"/>
</dbReference>
<dbReference type="HOGENOM" id="CLU_014505_1_1_1"/>
<dbReference type="InParanoid" id="Q5B0W8"/>
<dbReference type="OMA" id="CTALQWM"/>
<dbReference type="OrthoDB" id="79562at2759"/>
<dbReference type="Proteomes" id="UP000000560">
    <property type="component" value="Chromosome I"/>
</dbReference>
<dbReference type="GO" id="GO:0005829">
    <property type="term" value="C:cytosol"/>
    <property type="evidence" value="ECO:0000318"/>
    <property type="project" value="GO_Central"/>
</dbReference>
<dbReference type="GO" id="GO:0000328">
    <property type="term" value="C:fungal-type vacuole lumen"/>
    <property type="evidence" value="ECO:0007669"/>
    <property type="project" value="EnsemblFungi"/>
</dbReference>
<dbReference type="GO" id="GO:0005771">
    <property type="term" value="C:multivesicular body"/>
    <property type="evidence" value="ECO:0007669"/>
    <property type="project" value="EnsemblFungi"/>
</dbReference>
<dbReference type="GO" id="GO:0005634">
    <property type="term" value="C:nucleus"/>
    <property type="evidence" value="ECO:0007669"/>
    <property type="project" value="UniProtKB-SubCell"/>
</dbReference>
<dbReference type="GO" id="GO:0061957">
    <property type="term" value="C:NVT complex"/>
    <property type="evidence" value="ECO:0007669"/>
    <property type="project" value="EnsemblFungi"/>
</dbReference>
<dbReference type="GO" id="GO:0004177">
    <property type="term" value="F:aminopeptidase activity"/>
    <property type="evidence" value="ECO:0000250"/>
    <property type="project" value="UniProtKB"/>
</dbReference>
<dbReference type="GO" id="GO:0004301">
    <property type="term" value="F:epoxide hydrolase activity"/>
    <property type="evidence" value="ECO:0000250"/>
    <property type="project" value="UniProtKB"/>
</dbReference>
<dbReference type="GO" id="GO:0008237">
    <property type="term" value="F:metallopeptidase activity"/>
    <property type="evidence" value="ECO:0007669"/>
    <property type="project" value="UniProtKB-KW"/>
</dbReference>
<dbReference type="GO" id="GO:0008270">
    <property type="term" value="F:zinc ion binding"/>
    <property type="evidence" value="ECO:0000250"/>
    <property type="project" value="UniProtKB"/>
</dbReference>
<dbReference type="GO" id="GO:0120113">
    <property type="term" value="P:cytoplasm to vacuole targeting by the NVT pathway"/>
    <property type="evidence" value="ECO:0007669"/>
    <property type="project" value="EnsemblFungi"/>
</dbReference>
<dbReference type="GO" id="GO:0006629">
    <property type="term" value="P:lipid metabolic process"/>
    <property type="evidence" value="ECO:0007669"/>
    <property type="project" value="EnsemblFungi"/>
</dbReference>
<dbReference type="GO" id="GO:0043171">
    <property type="term" value="P:peptide catabolic process"/>
    <property type="evidence" value="ECO:0000250"/>
    <property type="project" value="UniProtKB"/>
</dbReference>
<dbReference type="GO" id="GO:0030163">
    <property type="term" value="P:protein catabolic process"/>
    <property type="evidence" value="ECO:0007669"/>
    <property type="project" value="EnsemblFungi"/>
</dbReference>
<dbReference type="GO" id="GO:0006508">
    <property type="term" value="P:proteolysis"/>
    <property type="evidence" value="ECO:0007669"/>
    <property type="project" value="UniProtKB-KW"/>
</dbReference>
<dbReference type="CDD" id="cd09599">
    <property type="entry name" value="M1_LTA4H"/>
    <property type="match status" value="1"/>
</dbReference>
<dbReference type="FunFam" id="1.10.390.10:FF:000009">
    <property type="entry name" value="Leukotriene A(4) hydrolase"/>
    <property type="match status" value="1"/>
</dbReference>
<dbReference type="FunFam" id="1.25.40.320:FF:000001">
    <property type="entry name" value="Leukotriene A(4) hydrolase"/>
    <property type="match status" value="1"/>
</dbReference>
<dbReference type="FunFam" id="2.60.40.1730:FF:000004">
    <property type="entry name" value="Leukotriene A(4) hydrolase"/>
    <property type="match status" value="1"/>
</dbReference>
<dbReference type="FunFam" id="3.30.2010.30:FF:000001">
    <property type="entry name" value="Leukotriene A(4) hydrolase"/>
    <property type="match status" value="1"/>
</dbReference>
<dbReference type="Gene3D" id="3.30.2010.30">
    <property type="match status" value="1"/>
</dbReference>
<dbReference type="Gene3D" id="1.10.390.10">
    <property type="entry name" value="Neutral Protease Domain 2"/>
    <property type="match status" value="1"/>
</dbReference>
<dbReference type="Gene3D" id="1.25.40.320">
    <property type="entry name" value="Peptidase M1, leukotriene A4 hydrolase/aminopeptidase C-terminal domain"/>
    <property type="match status" value="1"/>
</dbReference>
<dbReference type="Gene3D" id="2.60.40.1730">
    <property type="entry name" value="tricorn interacting facor f3 domain"/>
    <property type="match status" value="1"/>
</dbReference>
<dbReference type="InterPro" id="IPR045357">
    <property type="entry name" value="Aminopeptidase_N-like_N"/>
</dbReference>
<dbReference type="InterPro" id="IPR042097">
    <property type="entry name" value="Aminopeptidase_N-like_N_sf"/>
</dbReference>
<dbReference type="InterPro" id="IPR016024">
    <property type="entry name" value="ARM-type_fold"/>
</dbReference>
<dbReference type="InterPro" id="IPR012777">
    <property type="entry name" value="LTA4H"/>
</dbReference>
<dbReference type="InterPro" id="IPR049980">
    <property type="entry name" value="LTA4H_cat"/>
</dbReference>
<dbReference type="InterPro" id="IPR038502">
    <property type="entry name" value="M1_LTA-4_hydro/amino_C_sf"/>
</dbReference>
<dbReference type="InterPro" id="IPR034015">
    <property type="entry name" value="M1_LTA4H"/>
</dbReference>
<dbReference type="InterPro" id="IPR001930">
    <property type="entry name" value="Peptidase_M1"/>
</dbReference>
<dbReference type="InterPro" id="IPR015211">
    <property type="entry name" value="Peptidase_M1_C"/>
</dbReference>
<dbReference type="InterPro" id="IPR014782">
    <property type="entry name" value="Peptidase_M1_dom"/>
</dbReference>
<dbReference type="InterPro" id="IPR027268">
    <property type="entry name" value="Peptidase_M4/M1_CTD_sf"/>
</dbReference>
<dbReference type="NCBIfam" id="TIGR02411">
    <property type="entry name" value="leuko_A4_hydro"/>
    <property type="match status" value="1"/>
</dbReference>
<dbReference type="PANTHER" id="PTHR45726">
    <property type="entry name" value="LEUKOTRIENE A-4 HYDROLASE"/>
    <property type="match status" value="1"/>
</dbReference>
<dbReference type="PANTHER" id="PTHR45726:SF3">
    <property type="entry name" value="LEUKOTRIENE A-4 HYDROLASE"/>
    <property type="match status" value="1"/>
</dbReference>
<dbReference type="Pfam" id="PF09127">
    <property type="entry name" value="Leuk-A4-hydro_C"/>
    <property type="match status" value="1"/>
</dbReference>
<dbReference type="Pfam" id="PF01433">
    <property type="entry name" value="Peptidase_M1"/>
    <property type="match status" value="1"/>
</dbReference>
<dbReference type="Pfam" id="PF17900">
    <property type="entry name" value="Peptidase_M1_N"/>
    <property type="match status" value="1"/>
</dbReference>
<dbReference type="PRINTS" id="PR00756">
    <property type="entry name" value="ALADIPTASE"/>
</dbReference>
<dbReference type="SMART" id="SM01263">
    <property type="entry name" value="Leuk-A4-hydro_C"/>
    <property type="match status" value="1"/>
</dbReference>
<dbReference type="SUPFAM" id="SSF48371">
    <property type="entry name" value="ARM repeat"/>
    <property type="match status" value="1"/>
</dbReference>
<dbReference type="SUPFAM" id="SSF63737">
    <property type="entry name" value="Leukotriene A4 hydrolase N-terminal domain"/>
    <property type="match status" value="1"/>
</dbReference>
<dbReference type="SUPFAM" id="SSF55486">
    <property type="entry name" value="Metalloproteases ('zincins'), catalytic domain"/>
    <property type="match status" value="1"/>
</dbReference>
<dbReference type="PROSITE" id="PS00142">
    <property type="entry name" value="ZINC_PROTEASE"/>
    <property type="match status" value="1"/>
</dbReference>
<keyword id="KW-0963">Cytoplasm</keyword>
<keyword id="KW-0378">Hydrolase</keyword>
<keyword id="KW-0479">Metal-binding</keyword>
<keyword id="KW-0482">Metalloprotease</keyword>
<keyword id="KW-0539">Nucleus</keyword>
<keyword id="KW-0645">Protease</keyword>
<keyword id="KW-1185">Reference proteome</keyword>
<keyword id="KW-0862">Zinc</keyword>
<evidence type="ECO:0000250" key="1">
    <source>
        <dbReference type="UniProtKB" id="P09960"/>
    </source>
</evidence>
<evidence type="ECO:0000250" key="2">
    <source>
        <dbReference type="UniProtKB" id="Q10740"/>
    </source>
</evidence>
<evidence type="ECO:0000255" key="3">
    <source>
        <dbReference type="PROSITE-ProRule" id="PRU10095"/>
    </source>
</evidence>
<evidence type="ECO:0000305" key="4"/>
<protein>
    <recommendedName>
        <fullName>Leucine aminopeptidase 2</fullName>
        <ecNumber>3.4.11.-</ecNumber>
    </recommendedName>
    <alternativeName>
        <fullName>Epoxide hydrolase</fullName>
        <ecNumber>3.3.2.10</ecNumber>
    </alternativeName>
    <alternativeName>
        <fullName>Leukotriene A-4 hydrolase homolog</fullName>
        <shortName>LTA-4 hydrolase</shortName>
    </alternativeName>
</protein>
<organism>
    <name type="scientific">Emericella nidulans (strain FGSC A4 / ATCC 38163 / CBS 112.46 / NRRL 194 / M139)</name>
    <name type="common">Aspergillus nidulans</name>
    <dbReference type="NCBI Taxonomy" id="227321"/>
    <lineage>
        <taxon>Eukaryota</taxon>
        <taxon>Fungi</taxon>
        <taxon>Dikarya</taxon>
        <taxon>Ascomycota</taxon>
        <taxon>Pezizomycotina</taxon>
        <taxon>Eurotiomycetes</taxon>
        <taxon>Eurotiomycetidae</taxon>
        <taxon>Eurotiales</taxon>
        <taxon>Aspergillaceae</taxon>
        <taxon>Aspergillus</taxon>
        <taxon>Aspergillus subgen. Nidulantes</taxon>
    </lineage>
</organism>